<comment type="function">
    <text evidence="1">NDH shuttles electrons from NAD(P)H:plastoquinone, via FMN and iron-sulfur (Fe-S) centers, to quinones in the photosynthetic chain and possibly in a chloroplast respiratory chain. The immediate electron acceptor for the enzyme in this species is believed to be plastoquinone. Couples the redox reaction to proton translocation, and thus conserves the redox energy in a proton gradient.</text>
</comment>
<comment type="catalytic activity">
    <reaction evidence="1">
        <text>a plastoquinone + NADH + (n+1) H(+)(in) = a plastoquinol + NAD(+) + n H(+)(out)</text>
        <dbReference type="Rhea" id="RHEA:42608"/>
        <dbReference type="Rhea" id="RHEA-COMP:9561"/>
        <dbReference type="Rhea" id="RHEA-COMP:9562"/>
        <dbReference type="ChEBI" id="CHEBI:15378"/>
        <dbReference type="ChEBI" id="CHEBI:17757"/>
        <dbReference type="ChEBI" id="CHEBI:57540"/>
        <dbReference type="ChEBI" id="CHEBI:57945"/>
        <dbReference type="ChEBI" id="CHEBI:62192"/>
    </reaction>
</comment>
<comment type="catalytic activity">
    <reaction evidence="1">
        <text>a plastoquinone + NADPH + (n+1) H(+)(in) = a plastoquinol + NADP(+) + n H(+)(out)</text>
        <dbReference type="Rhea" id="RHEA:42612"/>
        <dbReference type="Rhea" id="RHEA-COMP:9561"/>
        <dbReference type="Rhea" id="RHEA-COMP:9562"/>
        <dbReference type="ChEBI" id="CHEBI:15378"/>
        <dbReference type="ChEBI" id="CHEBI:17757"/>
        <dbReference type="ChEBI" id="CHEBI:57783"/>
        <dbReference type="ChEBI" id="CHEBI:58349"/>
        <dbReference type="ChEBI" id="CHEBI:62192"/>
    </reaction>
</comment>
<comment type="cofactor">
    <cofactor evidence="1">
        <name>[4Fe-4S] cluster</name>
        <dbReference type="ChEBI" id="CHEBI:49883"/>
    </cofactor>
    <text evidence="1">Binds 2 [4Fe-4S] clusters per subunit.</text>
</comment>
<comment type="subunit">
    <text evidence="1">NDH is composed of at least 16 different subunits, 5 of which are encoded in the nucleus.</text>
</comment>
<comment type="subcellular location">
    <subcellularLocation>
        <location evidence="1">Plastid</location>
        <location evidence="1">Chloroplast thylakoid membrane</location>
        <topology evidence="1">Peripheral membrane protein</topology>
    </subcellularLocation>
</comment>
<comment type="similarity">
    <text evidence="1">Belongs to the complex I 23 kDa subunit family.</text>
</comment>
<dbReference type="EC" id="7.1.1.-" evidence="1"/>
<dbReference type="EMBL" id="AY522331">
    <property type="protein sequence ID" value="AAS46224.1"/>
    <property type="molecule type" value="Genomic_DNA"/>
</dbReference>
<dbReference type="RefSeq" id="YP_009305366.1">
    <property type="nucleotide sequence ID" value="NC_031333.1"/>
</dbReference>
<dbReference type="SMR" id="P0C384"/>
<dbReference type="GeneID" id="29141442"/>
<dbReference type="GO" id="GO:0009535">
    <property type="term" value="C:chloroplast thylakoid membrane"/>
    <property type="evidence" value="ECO:0007669"/>
    <property type="project" value="UniProtKB-SubCell"/>
</dbReference>
<dbReference type="GO" id="GO:0009536">
    <property type="term" value="C:plastid"/>
    <property type="evidence" value="ECO:0000305"/>
    <property type="project" value="Gramene"/>
</dbReference>
<dbReference type="GO" id="GO:0051539">
    <property type="term" value="F:4 iron, 4 sulfur cluster binding"/>
    <property type="evidence" value="ECO:0007669"/>
    <property type="project" value="UniProtKB-KW"/>
</dbReference>
<dbReference type="GO" id="GO:0005506">
    <property type="term" value="F:iron ion binding"/>
    <property type="evidence" value="ECO:0007669"/>
    <property type="project" value="UniProtKB-UniRule"/>
</dbReference>
<dbReference type="GO" id="GO:0008137">
    <property type="term" value="F:NADH dehydrogenase (ubiquinone) activity"/>
    <property type="evidence" value="ECO:0007669"/>
    <property type="project" value="InterPro"/>
</dbReference>
<dbReference type="GO" id="GO:0048038">
    <property type="term" value="F:quinone binding"/>
    <property type="evidence" value="ECO:0007669"/>
    <property type="project" value="UniProtKB-KW"/>
</dbReference>
<dbReference type="GO" id="GO:0019684">
    <property type="term" value="P:photosynthesis, light reaction"/>
    <property type="evidence" value="ECO:0007669"/>
    <property type="project" value="UniProtKB-UniRule"/>
</dbReference>
<dbReference type="Gene3D" id="3.30.70.3270">
    <property type="match status" value="1"/>
</dbReference>
<dbReference type="HAMAP" id="MF_01351">
    <property type="entry name" value="NDH1_NuoI"/>
    <property type="match status" value="1"/>
</dbReference>
<dbReference type="InterPro" id="IPR017896">
    <property type="entry name" value="4Fe4S_Fe-S-bd"/>
</dbReference>
<dbReference type="InterPro" id="IPR017900">
    <property type="entry name" value="4Fe4S_Fe_S_CS"/>
</dbReference>
<dbReference type="InterPro" id="IPR010226">
    <property type="entry name" value="NADH_quinone_OxRdtase_chainI"/>
</dbReference>
<dbReference type="InterPro" id="IPR004497">
    <property type="entry name" value="NDHI"/>
</dbReference>
<dbReference type="NCBIfam" id="TIGR00403">
    <property type="entry name" value="ndhI"/>
    <property type="match status" value="1"/>
</dbReference>
<dbReference type="NCBIfam" id="TIGR01971">
    <property type="entry name" value="NuoI"/>
    <property type="match status" value="1"/>
</dbReference>
<dbReference type="NCBIfam" id="NF004537">
    <property type="entry name" value="PRK05888.1-3"/>
    <property type="match status" value="1"/>
</dbReference>
<dbReference type="PANTHER" id="PTHR47275">
    <property type="entry name" value="NAD(P)H-QUINONE OXIDOREDUCTASE SUBUNIT I, CHLOROPLASTIC"/>
    <property type="match status" value="1"/>
</dbReference>
<dbReference type="PANTHER" id="PTHR47275:SF3">
    <property type="entry name" value="NAD(P)H-QUINONE OXIDOREDUCTASE SUBUNIT I, CHLOROPLASTIC"/>
    <property type="match status" value="1"/>
</dbReference>
<dbReference type="Pfam" id="PF13237">
    <property type="entry name" value="Fer4_10"/>
    <property type="match status" value="1"/>
</dbReference>
<dbReference type="SUPFAM" id="SSF54862">
    <property type="entry name" value="4Fe-4S ferredoxins"/>
    <property type="match status" value="1"/>
</dbReference>
<dbReference type="PROSITE" id="PS00198">
    <property type="entry name" value="4FE4S_FER_1"/>
    <property type="match status" value="2"/>
</dbReference>
<dbReference type="PROSITE" id="PS51379">
    <property type="entry name" value="4FE4S_FER_2"/>
    <property type="match status" value="2"/>
</dbReference>
<protein>
    <recommendedName>
        <fullName evidence="1">NAD(P)H-quinone oxidoreductase subunit I, chloroplastic</fullName>
        <ecNumber evidence="1">7.1.1.-</ecNumber>
    </recommendedName>
    <alternativeName>
        <fullName evidence="1">NAD(P)H dehydrogenase subunit I</fullName>
        <shortName evidence="1">NDH subunit I</shortName>
    </alternativeName>
    <alternativeName>
        <fullName evidence="1">NADH-plastoquinone oxidoreductase subunit I</fullName>
    </alternativeName>
</protein>
<sequence length="180" mass="21165">MFPMVTGFMSYGQQTIRAARYIGQSFIITLSHTNRLPITIHYPYEKSITSERFRGRIHFEFDKCIACEVCVRVCPIDLPLVDWRFEKDIKRKQLLNYSIDFGVCIFCGNCVEYCPTNCLSMTEEYELSTYDRHELNYNQIALSRLPISIMGDYTIQTIRNSTQSKIDEEKSWNSRTITDY</sequence>
<proteinExistence type="inferred from homology"/>
<feature type="chain" id="PRO_0000118711" description="NAD(P)H-quinone oxidoreductase subunit I, chloroplastic">
    <location>
        <begin position="1"/>
        <end position="180"/>
    </location>
</feature>
<feature type="domain" description="4Fe-4S ferredoxin-type 1" evidence="1">
    <location>
        <begin position="55"/>
        <end position="84"/>
    </location>
</feature>
<feature type="domain" description="4Fe-4S ferredoxin-type 2" evidence="1">
    <location>
        <begin position="95"/>
        <end position="124"/>
    </location>
</feature>
<feature type="binding site" evidence="1">
    <location>
        <position position="64"/>
    </location>
    <ligand>
        <name>[4Fe-4S] cluster</name>
        <dbReference type="ChEBI" id="CHEBI:49883"/>
        <label>1</label>
    </ligand>
</feature>
<feature type="binding site" evidence="1">
    <location>
        <position position="67"/>
    </location>
    <ligand>
        <name>[4Fe-4S] cluster</name>
        <dbReference type="ChEBI" id="CHEBI:49883"/>
        <label>1</label>
    </ligand>
</feature>
<feature type="binding site" evidence="1">
    <location>
        <position position="70"/>
    </location>
    <ligand>
        <name>[4Fe-4S] cluster</name>
        <dbReference type="ChEBI" id="CHEBI:49883"/>
        <label>1</label>
    </ligand>
</feature>
<feature type="binding site" evidence="1">
    <location>
        <position position="74"/>
    </location>
    <ligand>
        <name>[4Fe-4S] cluster</name>
        <dbReference type="ChEBI" id="CHEBI:49883"/>
        <label>2</label>
    </ligand>
</feature>
<feature type="binding site" evidence="1">
    <location>
        <position position="104"/>
    </location>
    <ligand>
        <name>[4Fe-4S] cluster</name>
        <dbReference type="ChEBI" id="CHEBI:49883"/>
        <label>2</label>
    </ligand>
</feature>
<feature type="binding site" evidence="1">
    <location>
        <position position="107"/>
    </location>
    <ligand>
        <name>[4Fe-4S] cluster</name>
        <dbReference type="ChEBI" id="CHEBI:49883"/>
        <label>2</label>
    </ligand>
</feature>
<feature type="binding site" evidence="1">
    <location>
        <position position="110"/>
    </location>
    <ligand>
        <name>[4Fe-4S] cluster</name>
        <dbReference type="ChEBI" id="CHEBI:49883"/>
        <label>2</label>
    </ligand>
</feature>
<feature type="binding site" evidence="1">
    <location>
        <position position="114"/>
    </location>
    <ligand>
        <name>[4Fe-4S] cluster</name>
        <dbReference type="ChEBI" id="CHEBI:49883"/>
        <label>1</label>
    </ligand>
</feature>
<organism>
    <name type="scientific">Oryza sativa</name>
    <name type="common">Rice</name>
    <dbReference type="NCBI Taxonomy" id="4530"/>
    <lineage>
        <taxon>Eukaryota</taxon>
        <taxon>Viridiplantae</taxon>
        <taxon>Streptophyta</taxon>
        <taxon>Embryophyta</taxon>
        <taxon>Tracheophyta</taxon>
        <taxon>Spermatophyta</taxon>
        <taxon>Magnoliopsida</taxon>
        <taxon>Liliopsida</taxon>
        <taxon>Poales</taxon>
        <taxon>Poaceae</taxon>
        <taxon>BOP clade</taxon>
        <taxon>Oryzoideae</taxon>
        <taxon>Oryzeae</taxon>
        <taxon>Oryzinae</taxon>
        <taxon>Oryza</taxon>
    </lineage>
</organism>
<keyword id="KW-0004">4Fe-4S</keyword>
<keyword id="KW-0150">Chloroplast</keyword>
<keyword id="KW-0408">Iron</keyword>
<keyword id="KW-0411">Iron-sulfur</keyword>
<keyword id="KW-0472">Membrane</keyword>
<keyword id="KW-0479">Metal-binding</keyword>
<keyword id="KW-0520">NAD</keyword>
<keyword id="KW-0521">NADP</keyword>
<keyword id="KW-0934">Plastid</keyword>
<keyword id="KW-0618">Plastoquinone</keyword>
<keyword id="KW-0874">Quinone</keyword>
<keyword id="KW-0677">Repeat</keyword>
<keyword id="KW-0793">Thylakoid</keyword>
<keyword id="KW-1278">Translocase</keyword>
<reference key="1">
    <citation type="journal article" date="2004" name="Plant Physiol.">
        <title>A comparison of rice chloroplast genomes.</title>
        <authorList>
            <person name="Tang J."/>
            <person name="Xia H."/>
            <person name="Cao M."/>
            <person name="Zhang X."/>
            <person name="Zeng W."/>
            <person name="Hu S."/>
            <person name="Tong W."/>
            <person name="Wang J."/>
            <person name="Wang J."/>
            <person name="Yu J."/>
            <person name="Yang H."/>
            <person name="Zhu L."/>
        </authorList>
    </citation>
    <scope>NUCLEOTIDE SEQUENCE [LARGE SCALE GENOMIC DNA]</scope>
    <source>
        <strain>cv. PA64s</strain>
    </source>
</reference>
<geneLocation type="chloroplast"/>
<evidence type="ECO:0000255" key="1">
    <source>
        <dbReference type="HAMAP-Rule" id="MF_01351"/>
    </source>
</evidence>
<accession>P0C384</accession>
<accession>P12099</accession>
<accession>Q6QXX0</accession>
<accession>Q6QY33</accession>
<gene>
    <name evidence="1" type="primary">ndhI</name>
    <name type="synonym">frxB</name>
    <name type="ORF">PA173</name>
</gene>
<name>NDHI_ORYSA</name>